<dbReference type="EMBL" id="AK023510">
    <property type="protein sequence ID" value="BAB14593.1"/>
    <property type="molecule type" value="mRNA"/>
</dbReference>
<dbReference type="EMBL" id="AK294093">
    <property type="protein sequence ID" value="BAH11670.1"/>
    <property type="molecule type" value="mRNA"/>
</dbReference>
<dbReference type="EMBL" id="AC010746">
    <property type="status" value="NOT_ANNOTATED_CDS"/>
    <property type="molecule type" value="Genomic_DNA"/>
</dbReference>
<dbReference type="EMBL" id="BC022453">
    <property type="protein sequence ID" value="AAH22453.1"/>
    <property type="molecule type" value="mRNA"/>
</dbReference>
<dbReference type="CCDS" id="CCDS2319.1">
    <molecule id="Q9H8M1-1"/>
</dbReference>
<dbReference type="RefSeq" id="NP_001307747.1">
    <property type="nucleotide sequence ID" value="NM_001320818.1"/>
</dbReference>
<dbReference type="RefSeq" id="NP_001307748.1">
    <property type="nucleotide sequence ID" value="NM_001320819.1"/>
</dbReference>
<dbReference type="RefSeq" id="NP_001307749.1">
    <molecule id="Q9H8M1-2"/>
    <property type="nucleotide sequence ID" value="NM_001320820.2"/>
</dbReference>
<dbReference type="RefSeq" id="NP_079423.1">
    <molecule id="Q9H8M1-1"/>
    <property type="nucleotide sequence ID" value="NM_025147.5"/>
</dbReference>
<dbReference type="SMR" id="Q9H8M1"/>
<dbReference type="BioGRID" id="123186">
    <property type="interactions" value="26"/>
</dbReference>
<dbReference type="FunCoup" id="Q9H8M1">
    <property type="interactions" value="901"/>
</dbReference>
<dbReference type="IntAct" id="Q9H8M1">
    <property type="interactions" value="13"/>
</dbReference>
<dbReference type="STRING" id="9606.ENSP00000263960"/>
<dbReference type="GlyCosmos" id="Q9H8M1">
    <property type="glycosylation" value="2 sites, 1 glycan"/>
</dbReference>
<dbReference type="GlyGen" id="Q9H8M1">
    <property type="glycosylation" value="2 sites, 1 O-linked glycan (2 sites)"/>
</dbReference>
<dbReference type="iPTMnet" id="Q9H8M1"/>
<dbReference type="PhosphoSitePlus" id="Q9H8M1"/>
<dbReference type="BioMuta" id="COQ10B"/>
<dbReference type="DMDM" id="74733854"/>
<dbReference type="jPOST" id="Q9H8M1"/>
<dbReference type="MassIVE" id="Q9H8M1"/>
<dbReference type="PaxDb" id="9606-ENSP00000263960"/>
<dbReference type="PeptideAtlas" id="Q9H8M1"/>
<dbReference type="ProteomicsDB" id="6385"/>
<dbReference type="ProteomicsDB" id="81217">
    <molecule id="Q9H8M1-1"/>
</dbReference>
<dbReference type="Pumba" id="Q9H8M1"/>
<dbReference type="Antibodypedia" id="56538">
    <property type="antibodies" value="51 antibodies from 12 providers"/>
</dbReference>
<dbReference type="DNASU" id="80219"/>
<dbReference type="Ensembl" id="ENST00000263960.7">
    <molecule id="Q9H8M1-1"/>
    <property type="protein sequence ID" value="ENSP00000263960.2"/>
    <property type="gene ID" value="ENSG00000115520.9"/>
</dbReference>
<dbReference type="GeneID" id="80219"/>
<dbReference type="KEGG" id="hsa:80219"/>
<dbReference type="MANE-Select" id="ENST00000263960.7">
    <property type="protein sequence ID" value="ENSP00000263960.2"/>
    <property type="RefSeq nucleotide sequence ID" value="NM_025147.5"/>
    <property type="RefSeq protein sequence ID" value="NP_079423.1"/>
</dbReference>
<dbReference type="UCSC" id="uc002uuh.2">
    <molecule id="Q9H8M1-1"/>
    <property type="organism name" value="human"/>
</dbReference>
<dbReference type="AGR" id="HGNC:25819"/>
<dbReference type="CTD" id="80219"/>
<dbReference type="DisGeNET" id="80219"/>
<dbReference type="GeneCards" id="COQ10B"/>
<dbReference type="HGNC" id="HGNC:25819">
    <property type="gene designation" value="COQ10B"/>
</dbReference>
<dbReference type="HPA" id="ENSG00000115520">
    <property type="expression patterns" value="Low tissue specificity"/>
</dbReference>
<dbReference type="MIM" id="620737">
    <property type="type" value="gene"/>
</dbReference>
<dbReference type="neXtProt" id="NX_Q9H8M1"/>
<dbReference type="OpenTargets" id="ENSG00000115520"/>
<dbReference type="PharmGKB" id="PA143485440"/>
<dbReference type="VEuPathDB" id="HostDB:ENSG00000115520"/>
<dbReference type="eggNOG" id="KOG3177">
    <property type="taxonomic scope" value="Eukaryota"/>
</dbReference>
<dbReference type="GeneTree" id="ENSGT00940000155367"/>
<dbReference type="InParanoid" id="Q9H8M1"/>
<dbReference type="OMA" id="IDGPFKY"/>
<dbReference type="OrthoDB" id="292693at2759"/>
<dbReference type="PAN-GO" id="Q9H8M1">
    <property type="GO annotations" value="4 GO annotations based on evolutionary models"/>
</dbReference>
<dbReference type="PhylomeDB" id="Q9H8M1"/>
<dbReference type="TreeFam" id="TF314447"/>
<dbReference type="PathwayCommons" id="Q9H8M1"/>
<dbReference type="Reactome" id="R-HSA-611105">
    <property type="pathway name" value="Respiratory electron transport"/>
</dbReference>
<dbReference type="Reactome" id="R-HSA-9864848">
    <property type="pathway name" value="Complex IV assembly"/>
</dbReference>
<dbReference type="SignaLink" id="Q9H8M1"/>
<dbReference type="BioGRID-ORCS" id="80219">
    <property type="hits" value="24 hits in 1154 CRISPR screens"/>
</dbReference>
<dbReference type="CD-CODE" id="FB4E32DD">
    <property type="entry name" value="Presynaptic clusters and postsynaptic densities"/>
</dbReference>
<dbReference type="ChiTaRS" id="COQ10B">
    <property type="organism name" value="human"/>
</dbReference>
<dbReference type="GenomeRNAi" id="80219"/>
<dbReference type="Pharos" id="Q9H8M1">
    <property type="development level" value="Tdark"/>
</dbReference>
<dbReference type="PRO" id="PR:Q9H8M1"/>
<dbReference type="Proteomes" id="UP000005640">
    <property type="component" value="Chromosome 2"/>
</dbReference>
<dbReference type="RNAct" id="Q9H8M1">
    <property type="molecule type" value="protein"/>
</dbReference>
<dbReference type="Bgee" id="ENSG00000115520">
    <property type="expression patterns" value="Expressed in oocyte and 201 other cell types or tissues"/>
</dbReference>
<dbReference type="ExpressionAtlas" id="Q9H8M1">
    <property type="expression patterns" value="baseline and differential"/>
</dbReference>
<dbReference type="GO" id="GO:0005743">
    <property type="term" value="C:mitochondrial inner membrane"/>
    <property type="evidence" value="ECO:0000304"/>
    <property type="project" value="Reactome"/>
</dbReference>
<dbReference type="GO" id="GO:0005739">
    <property type="term" value="C:mitochondrion"/>
    <property type="evidence" value="ECO:0006056"/>
    <property type="project" value="FlyBase"/>
</dbReference>
<dbReference type="GO" id="GO:0048039">
    <property type="term" value="F:ubiquinone binding"/>
    <property type="evidence" value="ECO:0007669"/>
    <property type="project" value="InterPro"/>
</dbReference>
<dbReference type="GO" id="GO:0045333">
    <property type="term" value="P:cellular respiration"/>
    <property type="evidence" value="ECO:0007669"/>
    <property type="project" value="InterPro"/>
</dbReference>
<dbReference type="CDD" id="cd07813">
    <property type="entry name" value="COQ10p_like"/>
    <property type="match status" value="1"/>
</dbReference>
<dbReference type="FunFam" id="3.30.530.20:FF:000002">
    <property type="entry name" value="Coenzyme Q-binding protein COQ10 homolog, mitochondrial"/>
    <property type="match status" value="1"/>
</dbReference>
<dbReference type="Gene3D" id="3.30.530.20">
    <property type="match status" value="1"/>
</dbReference>
<dbReference type="InterPro" id="IPR044996">
    <property type="entry name" value="COQ10-like"/>
</dbReference>
<dbReference type="InterPro" id="IPR005031">
    <property type="entry name" value="COQ10_START"/>
</dbReference>
<dbReference type="InterPro" id="IPR023393">
    <property type="entry name" value="START-like_dom_sf"/>
</dbReference>
<dbReference type="PANTHER" id="PTHR12901:SF9">
    <property type="entry name" value="COENZYME Q-BINDING PROTEIN COQ10 HOMOLOG B, MITOCHONDRIAL"/>
    <property type="match status" value="1"/>
</dbReference>
<dbReference type="PANTHER" id="PTHR12901">
    <property type="entry name" value="SPERM PROTEIN HOMOLOG"/>
    <property type="match status" value="1"/>
</dbReference>
<dbReference type="Pfam" id="PF03364">
    <property type="entry name" value="Polyketide_cyc"/>
    <property type="match status" value="1"/>
</dbReference>
<dbReference type="SUPFAM" id="SSF55961">
    <property type="entry name" value="Bet v1-like"/>
    <property type="match status" value="1"/>
</dbReference>
<evidence type="ECO:0000250" key="1"/>
<evidence type="ECO:0000255" key="2"/>
<evidence type="ECO:0000303" key="3">
    <source>
    </source>
</evidence>
<evidence type="ECO:0000305" key="4"/>
<name>CQ10B_HUMAN</name>
<proteinExistence type="evidence at protein level"/>
<organism>
    <name type="scientific">Homo sapiens</name>
    <name type="common">Human</name>
    <dbReference type="NCBI Taxonomy" id="9606"/>
    <lineage>
        <taxon>Eukaryota</taxon>
        <taxon>Metazoa</taxon>
        <taxon>Chordata</taxon>
        <taxon>Craniata</taxon>
        <taxon>Vertebrata</taxon>
        <taxon>Euteleostomi</taxon>
        <taxon>Mammalia</taxon>
        <taxon>Eutheria</taxon>
        <taxon>Euarchontoglires</taxon>
        <taxon>Primates</taxon>
        <taxon>Haplorrhini</taxon>
        <taxon>Catarrhini</taxon>
        <taxon>Hominidae</taxon>
        <taxon>Homo</taxon>
    </lineage>
</organism>
<protein>
    <recommendedName>
        <fullName>Coenzyme Q-binding protein COQ10 homolog B, mitochondrial</fullName>
    </recommendedName>
</protein>
<comment type="function">
    <text evidence="1">Required for the function of coenzyme Q in the respiratory chain. May serve as a chaperone or may be involved in the transport of Q6 from its site of synthesis to the catalytic sites of the respiratory complexes (By similarity).</text>
</comment>
<comment type="subunit">
    <text evidence="1">Interacts with coenzyme Q.</text>
</comment>
<comment type="subcellular location">
    <subcellularLocation>
        <location evidence="1">Mitochondrion inner membrane</location>
        <topology evidence="1">Peripheral membrane protein</topology>
        <orientation evidence="1">Matrix side</orientation>
    </subcellularLocation>
</comment>
<comment type="alternative products">
    <event type="alternative splicing"/>
    <isoform>
        <id>Q9H8M1-1</id>
        <name>1</name>
        <sequence type="displayed"/>
    </isoform>
    <isoform>
        <id>Q9H8M1-2</id>
        <name>2</name>
        <sequence type="described" ref="VSP_056949"/>
    </isoform>
</comment>
<comment type="similarity">
    <text evidence="4">Belongs to the COQ10 family.</text>
</comment>
<accession>Q9H8M1</accession>
<accession>B7Z1Y4</accession>
<gene>
    <name type="primary">COQ10B</name>
</gene>
<keyword id="KW-0025">Alternative splicing</keyword>
<keyword id="KW-0472">Membrane</keyword>
<keyword id="KW-0496">Mitochondrion</keyword>
<keyword id="KW-0999">Mitochondrion inner membrane</keyword>
<keyword id="KW-1267">Proteomics identification</keyword>
<keyword id="KW-1185">Reference proteome</keyword>
<keyword id="KW-0809">Transit peptide</keyword>
<sequence>MAARTGHTALRRVVSGCRPKSATAAGAQAPVRNGRYLASCGILMSRTLPLHTSILPKEICARTFFKITAPLINKRKEYSERRILGYSMQEMYDVVSGVEDYKHFVPWCKKSDVISKRSGYCKTRLEIGFPPVLERYTSVVTLVKPHLVKASCTDGRLFNHLETIWRFSPGLPGYPRTCTLDFSISFEFRSLLHSQLATLFFDEVVKQMVAAFERRACKLYGPETNIPRELMLHEVHHT</sequence>
<reference key="1">
    <citation type="journal article" date="2004" name="Nat. Genet.">
        <title>Complete sequencing and characterization of 21,243 full-length human cDNAs.</title>
        <authorList>
            <person name="Ota T."/>
            <person name="Suzuki Y."/>
            <person name="Nishikawa T."/>
            <person name="Otsuki T."/>
            <person name="Sugiyama T."/>
            <person name="Irie R."/>
            <person name="Wakamatsu A."/>
            <person name="Hayashi K."/>
            <person name="Sato H."/>
            <person name="Nagai K."/>
            <person name="Kimura K."/>
            <person name="Makita H."/>
            <person name="Sekine M."/>
            <person name="Obayashi M."/>
            <person name="Nishi T."/>
            <person name="Shibahara T."/>
            <person name="Tanaka T."/>
            <person name="Ishii S."/>
            <person name="Yamamoto J."/>
            <person name="Saito K."/>
            <person name="Kawai Y."/>
            <person name="Isono Y."/>
            <person name="Nakamura Y."/>
            <person name="Nagahari K."/>
            <person name="Murakami K."/>
            <person name="Yasuda T."/>
            <person name="Iwayanagi T."/>
            <person name="Wagatsuma M."/>
            <person name="Shiratori A."/>
            <person name="Sudo H."/>
            <person name="Hosoiri T."/>
            <person name="Kaku Y."/>
            <person name="Kodaira H."/>
            <person name="Kondo H."/>
            <person name="Sugawara M."/>
            <person name="Takahashi M."/>
            <person name="Kanda K."/>
            <person name="Yokoi T."/>
            <person name="Furuya T."/>
            <person name="Kikkawa E."/>
            <person name="Omura Y."/>
            <person name="Abe K."/>
            <person name="Kamihara K."/>
            <person name="Katsuta N."/>
            <person name="Sato K."/>
            <person name="Tanikawa M."/>
            <person name="Yamazaki M."/>
            <person name="Ninomiya K."/>
            <person name="Ishibashi T."/>
            <person name="Yamashita H."/>
            <person name="Murakawa K."/>
            <person name="Fujimori K."/>
            <person name="Tanai H."/>
            <person name="Kimata M."/>
            <person name="Watanabe M."/>
            <person name="Hiraoka S."/>
            <person name="Chiba Y."/>
            <person name="Ishida S."/>
            <person name="Ono Y."/>
            <person name="Takiguchi S."/>
            <person name="Watanabe S."/>
            <person name="Yosida M."/>
            <person name="Hotuta T."/>
            <person name="Kusano J."/>
            <person name="Kanehori K."/>
            <person name="Takahashi-Fujii A."/>
            <person name="Hara H."/>
            <person name="Tanase T.-O."/>
            <person name="Nomura Y."/>
            <person name="Togiya S."/>
            <person name="Komai F."/>
            <person name="Hara R."/>
            <person name="Takeuchi K."/>
            <person name="Arita M."/>
            <person name="Imose N."/>
            <person name="Musashino K."/>
            <person name="Yuuki H."/>
            <person name="Oshima A."/>
            <person name="Sasaki N."/>
            <person name="Aotsuka S."/>
            <person name="Yoshikawa Y."/>
            <person name="Matsunawa H."/>
            <person name="Ichihara T."/>
            <person name="Shiohata N."/>
            <person name="Sano S."/>
            <person name="Moriya S."/>
            <person name="Momiyama H."/>
            <person name="Satoh N."/>
            <person name="Takami S."/>
            <person name="Terashima Y."/>
            <person name="Suzuki O."/>
            <person name="Nakagawa S."/>
            <person name="Senoh A."/>
            <person name="Mizoguchi H."/>
            <person name="Goto Y."/>
            <person name="Shimizu F."/>
            <person name="Wakebe H."/>
            <person name="Hishigaki H."/>
            <person name="Watanabe T."/>
            <person name="Sugiyama A."/>
            <person name="Takemoto M."/>
            <person name="Kawakami B."/>
            <person name="Yamazaki M."/>
            <person name="Watanabe K."/>
            <person name="Kumagai A."/>
            <person name="Itakura S."/>
            <person name="Fukuzumi Y."/>
            <person name="Fujimori Y."/>
            <person name="Komiyama M."/>
            <person name="Tashiro H."/>
            <person name="Tanigami A."/>
            <person name="Fujiwara T."/>
            <person name="Ono T."/>
            <person name="Yamada K."/>
            <person name="Fujii Y."/>
            <person name="Ozaki K."/>
            <person name="Hirao M."/>
            <person name="Ohmori Y."/>
            <person name="Kawabata A."/>
            <person name="Hikiji T."/>
            <person name="Kobatake N."/>
            <person name="Inagaki H."/>
            <person name="Ikema Y."/>
            <person name="Okamoto S."/>
            <person name="Okitani R."/>
            <person name="Kawakami T."/>
            <person name="Noguchi S."/>
            <person name="Itoh T."/>
            <person name="Shigeta K."/>
            <person name="Senba T."/>
            <person name="Matsumura K."/>
            <person name="Nakajima Y."/>
            <person name="Mizuno T."/>
            <person name="Morinaga M."/>
            <person name="Sasaki M."/>
            <person name="Togashi T."/>
            <person name="Oyama M."/>
            <person name="Hata H."/>
            <person name="Watanabe M."/>
            <person name="Komatsu T."/>
            <person name="Mizushima-Sugano J."/>
            <person name="Satoh T."/>
            <person name="Shirai Y."/>
            <person name="Takahashi Y."/>
            <person name="Nakagawa K."/>
            <person name="Okumura K."/>
            <person name="Nagase T."/>
            <person name="Nomura N."/>
            <person name="Kikuchi H."/>
            <person name="Masuho Y."/>
            <person name="Yamashita R."/>
            <person name="Nakai K."/>
            <person name="Yada T."/>
            <person name="Nakamura Y."/>
            <person name="Ohara O."/>
            <person name="Isogai T."/>
            <person name="Sugano S."/>
        </authorList>
    </citation>
    <scope>NUCLEOTIDE SEQUENCE [LARGE SCALE MRNA] (ISOFORMS 1 AND 2)</scope>
    <source>
        <tissue>Brain cortex</tissue>
        <tissue>Placenta</tissue>
    </source>
</reference>
<reference key="2">
    <citation type="journal article" date="2005" name="Nature">
        <title>Generation and annotation of the DNA sequences of human chromosomes 2 and 4.</title>
        <authorList>
            <person name="Hillier L.W."/>
            <person name="Graves T.A."/>
            <person name="Fulton R.S."/>
            <person name="Fulton L.A."/>
            <person name="Pepin K.H."/>
            <person name="Minx P."/>
            <person name="Wagner-McPherson C."/>
            <person name="Layman D."/>
            <person name="Wylie K."/>
            <person name="Sekhon M."/>
            <person name="Becker M.C."/>
            <person name="Fewell G.A."/>
            <person name="Delehaunty K.D."/>
            <person name="Miner T.L."/>
            <person name="Nash W.E."/>
            <person name="Kremitzki C."/>
            <person name="Oddy L."/>
            <person name="Du H."/>
            <person name="Sun H."/>
            <person name="Bradshaw-Cordum H."/>
            <person name="Ali J."/>
            <person name="Carter J."/>
            <person name="Cordes M."/>
            <person name="Harris A."/>
            <person name="Isak A."/>
            <person name="van Brunt A."/>
            <person name="Nguyen C."/>
            <person name="Du F."/>
            <person name="Courtney L."/>
            <person name="Kalicki J."/>
            <person name="Ozersky P."/>
            <person name="Abbott S."/>
            <person name="Armstrong J."/>
            <person name="Belter E.A."/>
            <person name="Caruso L."/>
            <person name="Cedroni M."/>
            <person name="Cotton M."/>
            <person name="Davidson T."/>
            <person name="Desai A."/>
            <person name="Elliott G."/>
            <person name="Erb T."/>
            <person name="Fronick C."/>
            <person name="Gaige T."/>
            <person name="Haakenson W."/>
            <person name="Haglund K."/>
            <person name="Holmes A."/>
            <person name="Harkins R."/>
            <person name="Kim K."/>
            <person name="Kruchowski S.S."/>
            <person name="Strong C.M."/>
            <person name="Grewal N."/>
            <person name="Goyea E."/>
            <person name="Hou S."/>
            <person name="Levy A."/>
            <person name="Martinka S."/>
            <person name="Mead K."/>
            <person name="McLellan M.D."/>
            <person name="Meyer R."/>
            <person name="Randall-Maher J."/>
            <person name="Tomlinson C."/>
            <person name="Dauphin-Kohlberg S."/>
            <person name="Kozlowicz-Reilly A."/>
            <person name="Shah N."/>
            <person name="Swearengen-Shahid S."/>
            <person name="Snider J."/>
            <person name="Strong J.T."/>
            <person name="Thompson J."/>
            <person name="Yoakum M."/>
            <person name="Leonard S."/>
            <person name="Pearman C."/>
            <person name="Trani L."/>
            <person name="Radionenko M."/>
            <person name="Waligorski J.E."/>
            <person name="Wang C."/>
            <person name="Rock S.M."/>
            <person name="Tin-Wollam A.-M."/>
            <person name="Maupin R."/>
            <person name="Latreille P."/>
            <person name="Wendl M.C."/>
            <person name="Yang S.-P."/>
            <person name="Pohl C."/>
            <person name="Wallis J.W."/>
            <person name="Spieth J."/>
            <person name="Bieri T.A."/>
            <person name="Berkowicz N."/>
            <person name="Nelson J.O."/>
            <person name="Osborne J."/>
            <person name="Ding L."/>
            <person name="Meyer R."/>
            <person name="Sabo A."/>
            <person name="Shotland Y."/>
            <person name="Sinha P."/>
            <person name="Wohldmann P.E."/>
            <person name="Cook L.L."/>
            <person name="Hickenbotham M.T."/>
            <person name="Eldred J."/>
            <person name="Williams D."/>
            <person name="Jones T.A."/>
            <person name="She X."/>
            <person name="Ciccarelli F.D."/>
            <person name="Izaurralde E."/>
            <person name="Taylor J."/>
            <person name="Schmutz J."/>
            <person name="Myers R.M."/>
            <person name="Cox D.R."/>
            <person name="Huang X."/>
            <person name="McPherson J.D."/>
            <person name="Mardis E.R."/>
            <person name="Clifton S.W."/>
            <person name="Warren W.C."/>
            <person name="Chinwalla A.T."/>
            <person name="Eddy S.R."/>
            <person name="Marra M.A."/>
            <person name="Ovcharenko I."/>
            <person name="Furey T.S."/>
            <person name="Miller W."/>
            <person name="Eichler E.E."/>
            <person name="Bork P."/>
            <person name="Suyama M."/>
            <person name="Torrents D."/>
            <person name="Waterston R.H."/>
            <person name="Wilson R.K."/>
        </authorList>
    </citation>
    <scope>NUCLEOTIDE SEQUENCE [LARGE SCALE GENOMIC DNA]</scope>
</reference>
<reference key="3">
    <citation type="journal article" date="2004" name="Genome Res.">
        <title>The status, quality, and expansion of the NIH full-length cDNA project: the Mammalian Gene Collection (MGC).</title>
        <authorList>
            <consortium name="The MGC Project Team"/>
        </authorList>
    </citation>
    <scope>NUCLEOTIDE SEQUENCE [LARGE SCALE MRNA] (ISOFORM 1)</scope>
    <source>
        <tissue>Brain</tissue>
    </source>
</reference>
<feature type="transit peptide" description="Mitochondrion" evidence="2">
    <location>
        <begin position="1"/>
        <end position="37"/>
    </location>
</feature>
<feature type="chain" id="PRO_0000228647" description="Coenzyme Q-binding protein COQ10 homolog B, mitochondrial">
    <location>
        <begin position="38"/>
        <end position="238"/>
    </location>
</feature>
<feature type="splice variant" id="VSP_056949" description="In isoform 2." evidence="3">
    <location>
        <begin position="1"/>
        <end position="43"/>
    </location>
</feature>
<feature type="sequence variant" id="VAR_033823" description="In dbSNP:rs34946819.">
    <original>L</original>
    <variation>F</variation>
    <location>
        <position position="48"/>
    </location>
</feature>